<dbReference type="EC" id="2.7.1.11" evidence="1"/>
<dbReference type="EMBL" id="AF008220">
    <property type="protein sequence ID" value="AAC00342.1"/>
    <property type="molecule type" value="Genomic_DNA"/>
</dbReference>
<dbReference type="EMBL" id="AL009126">
    <property type="protein sequence ID" value="CAB14879.1"/>
    <property type="molecule type" value="Genomic_DNA"/>
</dbReference>
<dbReference type="PIR" id="A69675">
    <property type="entry name" value="A69675"/>
</dbReference>
<dbReference type="RefSeq" id="NP_390797.1">
    <property type="nucleotide sequence ID" value="NC_000964.3"/>
</dbReference>
<dbReference type="RefSeq" id="WP_003229420.1">
    <property type="nucleotide sequence ID" value="NZ_OZ025638.1"/>
</dbReference>
<dbReference type="PDB" id="4A3S">
    <property type="method" value="X-ray"/>
    <property type="resolution" value="2.30 A"/>
    <property type="chains" value="A/B=1-319"/>
</dbReference>
<dbReference type="PDBsum" id="4A3S"/>
<dbReference type="SMR" id="O34529"/>
<dbReference type="FunCoup" id="O34529">
    <property type="interactions" value="537"/>
</dbReference>
<dbReference type="IntAct" id="O34529">
    <property type="interactions" value="4"/>
</dbReference>
<dbReference type="MINT" id="O34529"/>
<dbReference type="STRING" id="224308.BSU29190"/>
<dbReference type="jPOST" id="O34529"/>
<dbReference type="PaxDb" id="224308-BSU29190"/>
<dbReference type="EnsemblBacteria" id="CAB14879">
    <property type="protein sequence ID" value="CAB14879"/>
    <property type="gene ID" value="BSU_29190"/>
</dbReference>
<dbReference type="GeneID" id="86872564"/>
<dbReference type="GeneID" id="937376"/>
<dbReference type="KEGG" id="bsu:BSU29190"/>
<dbReference type="PATRIC" id="fig|224308.179.peg.3169"/>
<dbReference type="eggNOG" id="COG0205">
    <property type="taxonomic scope" value="Bacteria"/>
</dbReference>
<dbReference type="InParanoid" id="O34529"/>
<dbReference type="OrthoDB" id="9802503at2"/>
<dbReference type="PhylomeDB" id="O34529"/>
<dbReference type="BioCyc" id="BSUB:BSU29190-MONOMER"/>
<dbReference type="SABIO-RK" id="O34529"/>
<dbReference type="UniPathway" id="UPA00109">
    <property type="reaction ID" value="UER00182"/>
</dbReference>
<dbReference type="EvolutionaryTrace" id="O34529"/>
<dbReference type="Proteomes" id="UP000001570">
    <property type="component" value="Chromosome"/>
</dbReference>
<dbReference type="GO" id="GO:0005945">
    <property type="term" value="C:6-phosphofructokinase complex"/>
    <property type="evidence" value="ECO:0000318"/>
    <property type="project" value="GO_Central"/>
</dbReference>
<dbReference type="GO" id="GO:0003872">
    <property type="term" value="F:6-phosphofructokinase activity"/>
    <property type="evidence" value="ECO:0000318"/>
    <property type="project" value="GO_Central"/>
</dbReference>
<dbReference type="GO" id="GO:0005524">
    <property type="term" value="F:ATP binding"/>
    <property type="evidence" value="ECO:0007669"/>
    <property type="project" value="UniProtKB-KW"/>
</dbReference>
<dbReference type="GO" id="GO:0070095">
    <property type="term" value="F:fructose-6-phosphate binding"/>
    <property type="evidence" value="ECO:0000318"/>
    <property type="project" value="GO_Central"/>
</dbReference>
<dbReference type="GO" id="GO:0046872">
    <property type="term" value="F:metal ion binding"/>
    <property type="evidence" value="ECO:0007669"/>
    <property type="project" value="UniProtKB-KW"/>
</dbReference>
<dbReference type="GO" id="GO:0061621">
    <property type="term" value="P:canonical glycolysis"/>
    <property type="evidence" value="ECO:0000318"/>
    <property type="project" value="GO_Central"/>
</dbReference>
<dbReference type="GO" id="GO:0030388">
    <property type="term" value="P:fructose 1,6-bisphosphate metabolic process"/>
    <property type="evidence" value="ECO:0000318"/>
    <property type="project" value="GO_Central"/>
</dbReference>
<dbReference type="GO" id="GO:0006002">
    <property type="term" value="P:fructose 6-phosphate metabolic process"/>
    <property type="evidence" value="ECO:0000318"/>
    <property type="project" value="GO_Central"/>
</dbReference>
<dbReference type="CDD" id="cd00763">
    <property type="entry name" value="Bacterial_PFK"/>
    <property type="match status" value="1"/>
</dbReference>
<dbReference type="FunFam" id="3.40.50.450:FF:000001">
    <property type="entry name" value="ATP-dependent 6-phosphofructokinase"/>
    <property type="match status" value="1"/>
</dbReference>
<dbReference type="FunFam" id="3.40.50.460:FF:000002">
    <property type="entry name" value="ATP-dependent 6-phosphofructokinase"/>
    <property type="match status" value="1"/>
</dbReference>
<dbReference type="Gene3D" id="3.40.50.450">
    <property type="match status" value="1"/>
</dbReference>
<dbReference type="Gene3D" id="3.40.50.460">
    <property type="entry name" value="Phosphofructokinase domain"/>
    <property type="match status" value="1"/>
</dbReference>
<dbReference type="HAMAP" id="MF_00339">
    <property type="entry name" value="Phosphofructokinase_I_B1"/>
    <property type="match status" value="1"/>
</dbReference>
<dbReference type="InterPro" id="IPR022953">
    <property type="entry name" value="ATP_PFK"/>
</dbReference>
<dbReference type="InterPro" id="IPR012003">
    <property type="entry name" value="ATP_PFK_prok-type"/>
</dbReference>
<dbReference type="InterPro" id="IPR012828">
    <property type="entry name" value="PFKA_ATP_prok"/>
</dbReference>
<dbReference type="InterPro" id="IPR015912">
    <property type="entry name" value="Phosphofructokinase_CS"/>
</dbReference>
<dbReference type="InterPro" id="IPR000023">
    <property type="entry name" value="Phosphofructokinase_dom"/>
</dbReference>
<dbReference type="InterPro" id="IPR035966">
    <property type="entry name" value="PKF_sf"/>
</dbReference>
<dbReference type="NCBIfam" id="TIGR02482">
    <property type="entry name" value="PFKA_ATP"/>
    <property type="match status" value="1"/>
</dbReference>
<dbReference type="NCBIfam" id="NF002872">
    <property type="entry name" value="PRK03202.1"/>
    <property type="match status" value="1"/>
</dbReference>
<dbReference type="PANTHER" id="PTHR13697:SF4">
    <property type="entry name" value="ATP-DEPENDENT 6-PHOSPHOFRUCTOKINASE"/>
    <property type="match status" value="1"/>
</dbReference>
<dbReference type="PANTHER" id="PTHR13697">
    <property type="entry name" value="PHOSPHOFRUCTOKINASE"/>
    <property type="match status" value="1"/>
</dbReference>
<dbReference type="Pfam" id="PF00365">
    <property type="entry name" value="PFK"/>
    <property type="match status" value="1"/>
</dbReference>
<dbReference type="PIRSF" id="PIRSF000532">
    <property type="entry name" value="ATP_PFK_prok"/>
    <property type="match status" value="1"/>
</dbReference>
<dbReference type="PRINTS" id="PR00476">
    <property type="entry name" value="PHFRCTKINASE"/>
</dbReference>
<dbReference type="SUPFAM" id="SSF53784">
    <property type="entry name" value="Phosphofructokinase"/>
    <property type="match status" value="1"/>
</dbReference>
<dbReference type="PROSITE" id="PS00433">
    <property type="entry name" value="PHOSPHOFRUCTOKINASE"/>
    <property type="match status" value="1"/>
</dbReference>
<protein>
    <recommendedName>
        <fullName evidence="1">ATP-dependent 6-phosphofructokinase</fullName>
        <shortName evidence="1">ATP-PFK</shortName>
        <shortName evidence="1">Phosphofructokinase</shortName>
        <ecNumber evidence="1">2.7.1.11</ecNumber>
    </recommendedName>
    <alternativeName>
        <fullName evidence="1">Phosphohexokinase</fullName>
    </alternativeName>
</protein>
<accession>O34529</accession>
<feature type="chain" id="PRO_0000111936" description="ATP-dependent 6-phosphofructokinase">
    <location>
        <begin position="1"/>
        <end position="319"/>
    </location>
</feature>
<feature type="active site" description="Proton acceptor" evidence="1">
    <location>
        <position position="127"/>
    </location>
</feature>
<feature type="binding site" evidence="1">
    <location>
        <position position="11"/>
    </location>
    <ligand>
        <name>ATP</name>
        <dbReference type="ChEBI" id="CHEBI:30616"/>
    </ligand>
</feature>
<feature type="binding site" evidence="1">
    <location>
        <begin position="21"/>
        <end position="25"/>
    </location>
    <ligand>
        <name>ADP</name>
        <dbReference type="ChEBI" id="CHEBI:456216"/>
        <note>allosteric activator; ligand shared between dimeric partners</note>
    </ligand>
</feature>
<feature type="binding site" evidence="1">
    <location>
        <begin position="72"/>
        <end position="73"/>
    </location>
    <ligand>
        <name>ATP</name>
        <dbReference type="ChEBI" id="CHEBI:30616"/>
    </ligand>
</feature>
<feature type="binding site" evidence="1">
    <location>
        <begin position="102"/>
        <end position="105"/>
    </location>
    <ligand>
        <name>ATP</name>
        <dbReference type="ChEBI" id="CHEBI:30616"/>
    </ligand>
</feature>
<feature type="binding site" evidence="1">
    <location>
        <position position="103"/>
    </location>
    <ligand>
        <name>Mg(2+)</name>
        <dbReference type="ChEBI" id="CHEBI:18420"/>
        <note>catalytic</note>
    </ligand>
</feature>
<feature type="binding site" description="in other chain" evidence="1">
    <location>
        <begin position="125"/>
        <end position="127"/>
    </location>
    <ligand>
        <name>substrate</name>
        <note>ligand shared between dimeric partners</note>
    </ligand>
</feature>
<feature type="binding site" description="in other chain" evidence="1">
    <location>
        <position position="154"/>
    </location>
    <ligand>
        <name>ADP</name>
        <dbReference type="ChEBI" id="CHEBI:456216"/>
        <note>allosteric activator; ligand shared between dimeric partners</note>
    </ligand>
</feature>
<feature type="binding site" evidence="1">
    <location>
        <position position="162"/>
    </location>
    <ligand>
        <name>substrate</name>
        <note>ligand shared between dimeric partners</note>
    </ligand>
</feature>
<feature type="binding site" description="in other chain" evidence="1">
    <location>
        <begin position="169"/>
        <end position="171"/>
    </location>
    <ligand>
        <name>substrate</name>
        <note>ligand shared between dimeric partners</note>
    </ligand>
</feature>
<feature type="binding site" description="in other chain" evidence="1">
    <location>
        <begin position="185"/>
        <end position="187"/>
    </location>
    <ligand>
        <name>ADP</name>
        <dbReference type="ChEBI" id="CHEBI:456216"/>
        <note>allosteric activator; ligand shared between dimeric partners</note>
    </ligand>
</feature>
<feature type="binding site" description="in other chain" evidence="1">
    <location>
        <position position="211"/>
    </location>
    <ligand>
        <name>ADP</name>
        <dbReference type="ChEBI" id="CHEBI:456216"/>
        <note>allosteric activator; ligand shared between dimeric partners</note>
    </ligand>
</feature>
<feature type="binding site" description="in other chain" evidence="1">
    <location>
        <begin position="213"/>
        <end position="215"/>
    </location>
    <ligand>
        <name>ADP</name>
        <dbReference type="ChEBI" id="CHEBI:456216"/>
        <note>allosteric activator; ligand shared between dimeric partners</note>
    </ligand>
</feature>
<feature type="binding site" description="in other chain" evidence="1">
    <location>
        <position position="222"/>
    </location>
    <ligand>
        <name>substrate</name>
        <note>ligand shared between dimeric partners</note>
    </ligand>
</feature>
<feature type="binding site" evidence="1">
    <location>
        <position position="243"/>
    </location>
    <ligand>
        <name>substrate</name>
        <note>ligand shared between dimeric partners</note>
    </ligand>
</feature>
<feature type="binding site" description="in other chain" evidence="1">
    <location>
        <begin position="249"/>
        <end position="252"/>
    </location>
    <ligand>
        <name>substrate</name>
        <note>ligand shared between dimeric partners</note>
    </ligand>
</feature>
<feature type="strand" evidence="7">
    <location>
        <begin position="3"/>
        <end position="11"/>
    </location>
</feature>
<feature type="helix" evidence="7">
    <location>
        <begin position="16"/>
        <end position="29"/>
    </location>
</feature>
<feature type="strand" evidence="7">
    <location>
        <begin position="33"/>
        <end position="37"/>
    </location>
</feature>
<feature type="helix" evidence="7">
    <location>
        <begin position="42"/>
        <end position="46"/>
    </location>
</feature>
<feature type="strand" evidence="7">
    <location>
        <begin position="49"/>
        <end position="52"/>
    </location>
</feature>
<feature type="helix" evidence="7">
    <location>
        <begin position="54"/>
        <end position="57"/>
    </location>
</feature>
<feature type="helix" evidence="7">
    <location>
        <begin position="74"/>
        <end position="77"/>
    </location>
</feature>
<feature type="helix" evidence="7">
    <location>
        <begin position="79"/>
        <end position="91"/>
    </location>
</feature>
<feature type="strand" evidence="7">
    <location>
        <begin position="96"/>
        <end position="101"/>
    </location>
</feature>
<feature type="helix" evidence="7">
    <location>
        <begin position="105"/>
        <end position="114"/>
    </location>
</feature>
<feature type="strand" evidence="7">
    <location>
        <begin position="119"/>
        <end position="125"/>
    </location>
</feature>
<feature type="helix" evidence="7">
    <location>
        <begin position="139"/>
        <end position="160"/>
    </location>
</feature>
<feature type="strand" evidence="7">
    <location>
        <begin position="163"/>
        <end position="168"/>
    </location>
</feature>
<feature type="helix" evidence="7">
    <location>
        <begin position="175"/>
        <end position="184"/>
    </location>
</feature>
<feature type="strand" evidence="7">
    <location>
        <begin position="187"/>
        <end position="191"/>
    </location>
</feature>
<feature type="helix" evidence="7">
    <location>
        <begin position="198"/>
        <end position="209"/>
    </location>
</feature>
<feature type="turn" evidence="7">
    <location>
        <begin position="210"/>
        <end position="212"/>
    </location>
</feature>
<feature type="strand" evidence="7">
    <location>
        <begin position="216"/>
        <end position="221"/>
    </location>
</feature>
<feature type="turn" evidence="7">
    <location>
        <begin position="222"/>
        <end position="224"/>
    </location>
</feature>
<feature type="helix" evidence="7">
    <location>
        <begin position="227"/>
        <end position="238"/>
    </location>
</feature>
<feature type="strand" evidence="7">
    <location>
        <begin position="242"/>
        <end position="246"/>
    </location>
</feature>
<feature type="helix" evidence="7">
    <location>
        <begin position="248"/>
        <end position="252"/>
    </location>
</feature>
<feature type="helix" evidence="7">
    <location>
        <begin position="258"/>
        <end position="275"/>
    </location>
</feature>
<feature type="turn" evidence="7">
    <location>
        <begin position="276"/>
        <end position="278"/>
    </location>
</feature>
<feature type="strand" evidence="7">
    <location>
        <begin position="281"/>
        <end position="287"/>
    </location>
</feature>
<feature type="strand" evidence="7">
    <location>
        <begin position="290"/>
        <end position="295"/>
    </location>
</feature>
<feature type="helix" evidence="7">
    <location>
        <begin position="296"/>
        <end position="299"/>
    </location>
</feature>
<feature type="strand" evidence="7">
    <location>
        <begin position="300"/>
        <end position="302"/>
    </location>
</feature>
<feature type="helix" evidence="7">
    <location>
        <begin position="308"/>
        <end position="318"/>
    </location>
</feature>
<proteinExistence type="evidence at protein level"/>
<keyword id="KW-0002">3D-structure</keyword>
<keyword id="KW-0021">Allosteric enzyme</keyword>
<keyword id="KW-0067">ATP-binding</keyword>
<keyword id="KW-0963">Cytoplasm</keyword>
<keyword id="KW-0324">Glycolysis</keyword>
<keyword id="KW-0418">Kinase</keyword>
<keyword id="KW-0460">Magnesium</keyword>
<keyword id="KW-0479">Metal-binding</keyword>
<keyword id="KW-0547">Nucleotide-binding</keyword>
<keyword id="KW-1185">Reference proteome</keyword>
<keyword id="KW-0808">Transferase</keyword>
<name>PFKA_BACSU</name>
<reference key="1">
    <citation type="journal article" date="1997" name="Microbiology">
        <title>Sequencing and functional annotation of the Bacillus subtilis genes in the 200 kb rrnB-dnaB region.</title>
        <authorList>
            <person name="Lapidus A."/>
            <person name="Galleron N."/>
            <person name="Sorokin A."/>
            <person name="Ehrlich S.D."/>
        </authorList>
    </citation>
    <scope>NUCLEOTIDE SEQUENCE [GENOMIC DNA]</scope>
    <source>
        <strain>168</strain>
    </source>
</reference>
<reference key="2">
    <citation type="journal article" date="1997" name="Nature">
        <title>The complete genome sequence of the Gram-positive bacterium Bacillus subtilis.</title>
        <authorList>
            <person name="Kunst F."/>
            <person name="Ogasawara N."/>
            <person name="Moszer I."/>
            <person name="Albertini A.M."/>
            <person name="Alloni G."/>
            <person name="Azevedo V."/>
            <person name="Bertero M.G."/>
            <person name="Bessieres P."/>
            <person name="Bolotin A."/>
            <person name="Borchert S."/>
            <person name="Borriss R."/>
            <person name="Boursier L."/>
            <person name="Brans A."/>
            <person name="Braun M."/>
            <person name="Brignell S.C."/>
            <person name="Bron S."/>
            <person name="Brouillet S."/>
            <person name="Bruschi C.V."/>
            <person name="Caldwell B."/>
            <person name="Capuano V."/>
            <person name="Carter N.M."/>
            <person name="Choi S.-K."/>
            <person name="Codani J.-J."/>
            <person name="Connerton I.F."/>
            <person name="Cummings N.J."/>
            <person name="Daniel R.A."/>
            <person name="Denizot F."/>
            <person name="Devine K.M."/>
            <person name="Duesterhoeft A."/>
            <person name="Ehrlich S.D."/>
            <person name="Emmerson P.T."/>
            <person name="Entian K.-D."/>
            <person name="Errington J."/>
            <person name="Fabret C."/>
            <person name="Ferrari E."/>
            <person name="Foulger D."/>
            <person name="Fritz C."/>
            <person name="Fujita M."/>
            <person name="Fujita Y."/>
            <person name="Fuma S."/>
            <person name="Galizzi A."/>
            <person name="Galleron N."/>
            <person name="Ghim S.-Y."/>
            <person name="Glaser P."/>
            <person name="Goffeau A."/>
            <person name="Golightly E.J."/>
            <person name="Grandi G."/>
            <person name="Guiseppi G."/>
            <person name="Guy B.J."/>
            <person name="Haga K."/>
            <person name="Haiech J."/>
            <person name="Harwood C.R."/>
            <person name="Henaut A."/>
            <person name="Hilbert H."/>
            <person name="Holsappel S."/>
            <person name="Hosono S."/>
            <person name="Hullo M.-F."/>
            <person name="Itaya M."/>
            <person name="Jones L.-M."/>
            <person name="Joris B."/>
            <person name="Karamata D."/>
            <person name="Kasahara Y."/>
            <person name="Klaerr-Blanchard M."/>
            <person name="Klein C."/>
            <person name="Kobayashi Y."/>
            <person name="Koetter P."/>
            <person name="Koningstein G."/>
            <person name="Krogh S."/>
            <person name="Kumano M."/>
            <person name="Kurita K."/>
            <person name="Lapidus A."/>
            <person name="Lardinois S."/>
            <person name="Lauber J."/>
            <person name="Lazarevic V."/>
            <person name="Lee S.-M."/>
            <person name="Levine A."/>
            <person name="Liu H."/>
            <person name="Masuda S."/>
            <person name="Mauel C."/>
            <person name="Medigue C."/>
            <person name="Medina N."/>
            <person name="Mellado R.P."/>
            <person name="Mizuno M."/>
            <person name="Moestl D."/>
            <person name="Nakai S."/>
            <person name="Noback M."/>
            <person name="Noone D."/>
            <person name="O'Reilly M."/>
            <person name="Ogawa K."/>
            <person name="Ogiwara A."/>
            <person name="Oudega B."/>
            <person name="Park S.-H."/>
            <person name="Parro V."/>
            <person name="Pohl T.M."/>
            <person name="Portetelle D."/>
            <person name="Porwollik S."/>
            <person name="Prescott A.M."/>
            <person name="Presecan E."/>
            <person name="Pujic P."/>
            <person name="Purnelle B."/>
            <person name="Rapoport G."/>
            <person name="Rey M."/>
            <person name="Reynolds S."/>
            <person name="Rieger M."/>
            <person name="Rivolta C."/>
            <person name="Rocha E."/>
            <person name="Roche B."/>
            <person name="Rose M."/>
            <person name="Sadaie Y."/>
            <person name="Sato T."/>
            <person name="Scanlan E."/>
            <person name="Schleich S."/>
            <person name="Schroeter R."/>
            <person name="Scoffone F."/>
            <person name="Sekiguchi J."/>
            <person name="Sekowska A."/>
            <person name="Seror S.J."/>
            <person name="Serror P."/>
            <person name="Shin B.-S."/>
            <person name="Soldo B."/>
            <person name="Sorokin A."/>
            <person name="Tacconi E."/>
            <person name="Takagi T."/>
            <person name="Takahashi H."/>
            <person name="Takemaru K."/>
            <person name="Takeuchi M."/>
            <person name="Tamakoshi A."/>
            <person name="Tanaka T."/>
            <person name="Terpstra P."/>
            <person name="Tognoni A."/>
            <person name="Tosato V."/>
            <person name="Uchiyama S."/>
            <person name="Vandenbol M."/>
            <person name="Vannier F."/>
            <person name="Vassarotti A."/>
            <person name="Viari A."/>
            <person name="Wambutt R."/>
            <person name="Wedler E."/>
            <person name="Wedler H."/>
            <person name="Weitzenegger T."/>
            <person name="Winters P."/>
            <person name="Wipat A."/>
            <person name="Yamamoto H."/>
            <person name="Yamane K."/>
            <person name="Yasumoto K."/>
            <person name="Yata K."/>
            <person name="Yoshida K."/>
            <person name="Yoshikawa H.-F."/>
            <person name="Zumstein E."/>
            <person name="Yoshikawa H."/>
            <person name="Danchin A."/>
        </authorList>
    </citation>
    <scope>NUCLEOTIDE SEQUENCE [LARGE SCALE GENOMIC DNA]</scope>
    <source>
        <strain>168</strain>
    </source>
</reference>
<reference key="3">
    <citation type="journal article" date="2009" name="Mol. Cell. Proteomics">
        <title>Novel activities of glycolytic enzymes in Bacillus subtilis: interactions with essential proteins involved in mRNA processing.</title>
        <authorList>
            <person name="Commichau F.M."/>
            <person name="Rothe F.M."/>
            <person name="Herzberg C."/>
            <person name="Wagner E."/>
            <person name="Hellwig D."/>
            <person name="Lehnik-Habrink M."/>
            <person name="Hammer E."/>
            <person name="Volker U."/>
            <person name="Stulke J."/>
        </authorList>
    </citation>
    <scope>SUBUNIT</scope>
    <source>
        <strain>168</strain>
    </source>
</reference>
<reference key="4">
    <citation type="journal article" date="2011" name="J. Bacteriol.">
        <title>RNase Y in Bacillus subtilis: a natively disordered protein that is the functional equivalent of RNase E from Escherichia coli.</title>
        <authorList>
            <person name="Lehnik-Habrink M."/>
            <person name="Newman J."/>
            <person name="Rothe F.M."/>
            <person name="Solovyova A.S."/>
            <person name="Rodrigues C."/>
            <person name="Herzberg C."/>
            <person name="Commichau F.M."/>
            <person name="Lewis R.J."/>
            <person name="Stulke J."/>
        </authorList>
    </citation>
    <scope>INTERACTION WITH RNY</scope>
    <scope>SUBUNIT</scope>
    <source>
        <strain>168</strain>
    </source>
</reference>
<reference key="5">
    <citation type="journal article" date="2021" name="Redox Biol.">
        <title>The Bacillus subtilis monothiol bacilliredoxin BrxC (YtxJ) and the Bdr (YpdA) disulfide reductase reduce S-bacillithiolated proteins.</title>
        <authorList>
            <person name="Gaballa A."/>
            <person name="Su T.T."/>
            <person name="Helmann J.D."/>
        </authorList>
    </citation>
    <scope>INTERACTION WITH BRXC</scope>
    <scope>IDENTIFICATION BY MASS SPECTROMETRY</scope>
    <source>
        <strain evidence="6">168 / CU1065</strain>
    </source>
</reference>
<reference key="6">
    <citation type="journal article" date="2012" name="J. Mol. Biol.">
        <title>Dissection of the network of interactions that links RNA processing with glycolysis in the Bacillus subtilis degradosome.</title>
        <authorList>
            <person name="Newman J.A."/>
            <person name="Hewitt L."/>
            <person name="Rodrigues C."/>
            <person name="Solovyova A.S."/>
            <person name="Harwood C.R."/>
            <person name="Lewis R.J."/>
        </authorList>
    </citation>
    <scope>X-RAY CRYSTALLOGRAPHY (2.3 ANGSTROMS)</scope>
    <scope>INTERACTION WITH ENO</scope>
    <scope>SUBUNIT</scope>
    <source>
        <strain>168</strain>
    </source>
</reference>
<comment type="function">
    <text evidence="1">Catalyzes the phosphorylation of D-fructose 6-phosphate to fructose 1,6-bisphosphate by ATP, the first committing step of glycolysis.</text>
</comment>
<comment type="catalytic activity">
    <reaction evidence="1">
        <text>beta-D-fructose 6-phosphate + ATP = beta-D-fructose 1,6-bisphosphate + ADP + H(+)</text>
        <dbReference type="Rhea" id="RHEA:16109"/>
        <dbReference type="ChEBI" id="CHEBI:15378"/>
        <dbReference type="ChEBI" id="CHEBI:30616"/>
        <dbReference type="ChEBI" id="CHEBI:32966"/>
        <dbReference type="ChEBI" id="CHEBI:57634"/>
        <dbReference type="ChEBI" id="CHEBI:456216"/>
        <dbReference type="EC" id="2.7.1.11"/>
    </reaction>
</comment>
<comment type="cofactor">
    <cofactor evidence="1">
        <name>Mg(2+)</name>
        <dbReference type="ChEBI" id="CHEBI:18420"/>
    </cofactor>
</comment>
<comment type="activity regulation">
    <text evidence="1">Allosterically activated by ADP and other diphosphonucleosides, and allosterically inhibited by phosphoenolpyruvate.</text>
</comment>
<comment type="pathway">
    <text evidence="1">Carbohydrate degradation; glycolysis; D-glyceraldehyde 3-phosphate and glycerone phosphate from D-glucose: step 3/4.</text>
</comment>
<comment type="subunit">
    <text evidence="1 2 3 4 5">Homotetramer. Component of a possible RNA degradosome complex composed of rny, rnjA, rnjB, pnp, pfkA and eno (PubMed:19193632) (although rnjA and rnjB's presence is unclear). Specifically interacts with RNase Y (rny, PubMed:21803996) and enolase (eno, PubMed:22198292). Interacts with BrxC (PubMed:33722570).</text>
</comment>
<comment type="interaction">
    <interactant intactId="EBI-5250040">
        <id>O34529</id>
    </interactant>
    <interactant intactId="EBI-6415578">
        <id>O31774</id>
        <label>rny</label>
    </interactant>
    <organismsDiffer>false</organismsDiffer>
    <experiments>2</experiments>
</comment>
<comment type="subcellular location">
    <subcellularLocation>
        <location evidence="1">Cytoplasm</location>
    </subcellularLocation>
</comment>
<comment type="similarity">
    <text evidence="1">Belongs to the phosphofructokinase type A (PFKA) family. ATP-dependent PFK group I subfamily. Prokaryotic clade 'B1' sub-subfamily.</text>
</comment>
<evidence type="ECO:0000255" key="1">
    <source>
        <dbReference type="HAMAP-Rule" id="MF_00339"/>
    </source>
</evidence>
<evidence type="ECO:0000269" key="2">
    <source>
    </source>
</evidence>
<evidence type="ECO:0000269" key="3">
    <source>
    </source>
</evidence>
<evidence type="ECO:0000269" key="4">
    <source>
    </source>
</evidence>
<evidence type="ECO:0000269" key="5">
    <source>
    </source>
</evidence>
<evidence type="ECO:0000303" key="6">
    <source>
    </source>
</evidence>
<evidence type="ECO:0007829" key="7">
    <source>
        <dbReference type="PDB" id="4A3S"/>
    </source>
</evidence>
<sequence length="319" mass="34254">MKRIGVLTSGGDSPGMNAAVRAVVRKAIYHDVEVYGIYNGYAGLISGKIEKLELGSVGDIIHRGGTKLYTARCPEFKTVEGREKGIANLKKLGIEGLVVIGGDGSYMGAKKLTEHGFPCVGVPGTIDNDIPGTDFTIGFDTALNTVIDAIDKIRDTATSHERTYVIEVMGRHAGDIALWAGLAGGAESILIPEADYDMHEIIARLKRGHERGKKHSIIIVAEGVGSGVEFGKRIEEETNLETRVSVLGHIQRGGSPSAADRVLASRLGAYAVELLLEGKGGRCVGIQNNKLVDHDIIEILETKHTVEQNMYQLSKELSI</sequence>
<organism>
    <name type="scientific">Bacillus subtilis (strain 168)</name>
    <dbReference type="NCBI Taxonomy" id="224308"/>
    <lineage>
        <taxon>Bacteria</taxon>
        <taxon>Bacillati</taxon>
        <taxon>Bacillota</taxon>
        <taxon>Bacilli</taxon>
        <taxon>Bacillales</taxon>
        <taxon>Bacillaceae</taxon>
        <taxon>Bacillus</taxon>
    </lineage>
</organism>
<gene>
    <name evidence="1" type="primary">pfkA</name>
    <name type="synonym">pfk</name>
    <name type="ordered locus">BSU29190</name>
</gene>